<proteinExistence type="inferred from homology"/>
<reference key="1">
    <citation type="journal article" date="2002" name="Proc. Natl. Acad. Sci. U.S.A.">
        <title>The complete genome of hyperthermophile Methanopyrus kandleri AV19 and monophyly of archaeal methanogens.</title>
        <authorList>
            <person name="Slesarev A.I."/>
            <person name="Mezhevaya K.V."/>
            <person name="Makarova K.S."/>
            <person name="Polushin N.N."/>
            <person name="Shcherbinina O.V."/>
            <person name="Shakhova V.V."/>
            <person name="Belova G.I."/>
            <person name="Aravind L."/>
            <person name="Natale D.A."/>
            <person name="Rogozin I.B."/>
            <person name="Tatusov R.L."/>
            <person name="Wolf Y.I."/>
            <person name="Stetter K.O."/>
            <person name="Malykh A.G."/>
            <person name="Koonin E.V."/>
            <person name="Kozyavkin S.A."/>
        </authorList>
    </citation>
    <scope>NUCLEOTIDE SEQUENCE [LARGE SCALE GENOMIC DNA]</scope>
    <source>
        <strain>AV19 / DSM 6324 / JCM 9639 / NBRC 100938</strain>
    </source>
</reference>
<name>MTRF_METKA</name>
<sequence length="75" mass="8130">MAEEGSELKEVIIGAPAMADTDRADTYVNDVRDSSQFFGRDARLYFGLNVNRFAGLACGMVFAGVLLVPLLLLAF</sequence>
<keyword id="KW-1003">Cell membrane</keyword>
<keyword id="KW-0472">Membrane</keyword>
<keyword id="KW-0484">Methanogenesis</keyword>
<keyword id="KW-0489">Methyltransferase</keyword>
<keyword id="KW-0554">One-carbon metabolism</keyword>
<keyword id="KW-1185">Reference proteome</keyword>
<keyword id="KW-0808">Transferase</keyword>
<keyword id="KW-1278">Translocase</keyword>
<keyword id="KW-0812">Transmembrane</keyword>
<keyword id="KW-1133">Transmembrane helix</keyword>
<comment type="function">
    <text evidence="1">Part of a complex that catalyzes the formation of methyl-coenzyme M and tetrahydromethanopterin from coenzyme M and methyl-tetrahydromethanopterin. This is an energy-conserving, sodium-ion translocating step.</text>
</comment>
<comment type="catalytic activity">
    <reaction evidence="1">
        <text>5-methyl-5,6,7,8-tetrahydromethanopterin + coenzyme M + 2 Na(+)(in) = 5,6,7,8-tetrahydromethanopterin + methyl-coenzyme M + 2 Na(+)(out)</text>
        <dbReference type="Rhea" id="RHEA:53492"/>
        <dbReference type="ChEBI" id="CHEBI:29101"/>
        <dbReference type="ChEBI" id="CHEBI:58103"/>
        <dbReference type="ChEBI" id="CHEBI:58116"/>
        <dbReference type="ChEBI" id="CHEBI:58286"/>
        <dbReference type="ChEBI" id="CHEBI:58319"/>
        <dbReference type="EC" id="7.2.1.4"/>
    </reaction>
</comment>
<comment type="pathway">
    <text evidence="1">One-carbon metabolism; methanogenesis from CO(2); methyl-coenzyme M from 5,10-methylene-5,6,7,8-tetrahydromethanopterin: step 2/2.</text>
</comment>
<comment type="subunit">
    <text evidence="1">The complex is composed of 8 subunits; MtrA, MtrB, MtrC, MtrD, MtrE, MtrF, MtrG and MtrH.</text>
</comment>
<comment type="subcellular location">
    <subcellularLocation>
        <location evidence="1">Cell membrane</location>
        <topology evidence="1">Single-pass membrane protein</topology>
    </subcellularLocation>
</comment>
<comment type="miscellaneous">
    <text>Unlike other orthologs, MtrF from M.kandleri is not located in the mtr operon.</text>
</comment>
<comment type="similarity">
    <text evidence="1">Belongs to the MtrF family.</text>
</comment>
<protein>
    <recommendedName>
        <fullName evidence="1">Tetrahydromethanopterin S-methyltransferase subunit F</fullName>
        <ecNumber evidence="1">7.2.1.4</ecNumber>
    </recommendedName>
    <alternativeName>
        <fullName evidence="1">N5-methyltetrahydromethanopterin--coenzyme M methyltransferase subunit F</fullName>
    </alternativeName>
</protein>
<organism>
    <name type="scientific">Methanopyrus kandleri (strain AV19 / DSM 6324 / JCM 9639 / NBRC 100938)</name>
    <dbReference type="NCBI Taxonomy" id="190192"/>
    <lineage>
        <taxon>Archaea</taxon>
        <taxon>Methanobacteriati</taxon>
        <taxon>Methanobacteriota</taxon>
        <taxon>Methanomada group</taxon>
        <taxon>Methanopyri</taxon>
        <taxon>Methanopyrales</taxon>
        <taxon>Methanopyraceae</taxon>
        <taxon>Methanopyrus</taxon>
    </lineage>
</organism>
<feature type="chain" id="PRO_0000147549" description="Tetrahydromethanopterin S-methyltransferase subunit F">
    <location>
        <begin position="1"/>
        <end position="75"/>
    </location>
</feature>
<feature type="transmembrane region" description="Helical" evidence="1">
    <location>
        <begin position="53"/>
        <end position="73"/>
    </location>
</feature>
<dbReference type="EC" id="7.2.1.4" evidence="1"/>
<dbReference type="EMBL" id="AE009439">
    <property type="protein sequence ID" value="AAM02698.1"/>
    <property type="molecule type" value="Genomic_DNA"/>
</dbReference>
<dbReference type="RefSeq" id="WP_011019853.1">
    <property type="nucleotide sequence ID" value="NC_003551.1"/>
</dbReference>
<dbReference type="SMR" id="Q8TVA7"/>
<dbReference type="STRING" id="190192.MK1485"/>
<dbReference type="PaxDb" id="190192-MK1485"/>
<dbReference type="EnsemblBacteria" id="AAM02698">
    <property type="protein sequence ID" value="AAM02698"/>
    <property type="gene ID" value="MK1485"/>
</dbReference>
<dbReference type="GeneID" id="1478080"/>
<dbReference type="KEGG" id="mka:MK1485"/>
<dbReference type="HOGENOM" id="CLU_2662350_0_0_2"/>
<dbReference type="InParanoid" id="Q8TVA7"/>
<dbReference type="OrthoDB" id="374626at2157"/>
<dbReference type="UniPathway" id="UPA00640">
    <property type="reaction ID" value="UER00698"/>
</dbReference>
<dbReference type="Proteomes" id="UP000001826">
    <property type="component" value="Chromosome"/>
</dbReference>
<dbReference type="GO" id="GO:0005886">
    <property type="term" value="C:plasma membrane"/>
    <property type="evidence" value="ECO:0007669"/>
    <property type="project" value="UniProtKB-SubCell"/>
</dbReference>
<dbReference type="GO" id="GO:0030269">
    <property type="term" value="F:tetrahydromethanopterin S-methyltransferase activity"/>
    <property type="evidence" value="ECO:0007669"/>
    <property type="project" value="UniProtKB-UniRule"/>
</dbReference>
<dbReference type="GO" id="GO:0019386">
    <property type="term" value="P:methanogenesis, from carbon dioxide"/>
    <property type="evidence" value="ECO:0007669"/>
    <property type="project" value="UniProtKB-UniRule"/>
</dbReference>
<dbReference type="GO" id="GO:0032259">
    <property type="term" value="P:methylation"/>
    <property type="evidence" value="ECO:0007669"/>
    <property type="project" value="UniProtKB-KW"/>
</dbReference>
<dbReference type="GO" id="GO:0006730">
    <property type="term" value="P:one-carbon metabolic process"/>
    <property type="evidence" value="ECO:0007669"/>
    <property type="project" value="UniProtKB-UniRule"/>
</dbReference>
<dbReference type="HAMAP" id="MF_01099">
    <property type="entry name" value="MtrF"/>
    <property type="match status" value="1"/>
</dbReference>
<dbReference type="InterPro" id="IPR011307">
    <property type="entry name" value="MeTrfase_F"/>
</dbReference>
<dbReference type="InterPro" id="IPR013347">
    <property type="entry name" value="MeTrfase_F_su"/>
</dbReference>
<dbReference type="NCBIfam" id="TIGR02507">
    <property type="entry name" value="MtrF"/>
    <property type="match status" value="1"/>
</dbReference>
<dbReference type="Pfam" id="PF09472">
    <property type="entry name" value="MtrF"/>
    <property type="match status" value="1"/>
</dbReference>
<dbReference type="PIRSF" id="PIRSF006523">
    <property type="entry name" value="MtrF"/>
    <property type="match status" value="1"/>
</dbReference>
<evidence type="ECO:0000255" key="1">
    <source>
        <dbReference type="HAMAP-Rule" id="MF_01099"/>
    </source>
</evidence>
<gene>
    <name evidence="1" type="primary">mtrF</name>
    <name type="ordered locus">MK1485</name>
</gene>
<accession>Q8TVA7</accession>